<name>LTRB_LACLM</name>
<gene>
    <name type="primary">ltrBE1</name>
    <name type="synonym">mobAE1</name>
    <name type="ordered locus">llmg_1372</name>
</gene>
<gene>
    <name type="primary">ltrBE2</name>
    <name type="synonym">mobAE2</name>
    <name type="ordered locus">llmg_1370</name>
</gene>
<feature type="chain" id="PRO_0000084515" description="Group II intron-interrupted relaxase LtrB">
    <location>
        <begin position="1"/>
        <end position="563"/>
    </location>
</feature>
<feature type="active site" evidence="1">
    <location>
        <position position="44"/>
    </location>
</feature>
<feature type="binding site" evidence="1">
    <location>
        <position position="159"/>
    </location>
    <ligand>
        <name>Mg(2+)</name>
        <dbReference type="ChEBI" id="CHEBI:18420"/>
    </ligand>
</feature>
<feature type="binding site" evidence="1">
    <location>
        <position position="161"/>
    </location>
    <ligand>
        <name>Mg(2+)</name>
        <dbReference type="ChEBI" id="CHEBI:18420"/>
    </ligand>
</feature>
<protein>
    <recommendedName>
        <fullName>Group II intron-interrupted relaxase LtrB</fullName>
    </recommendedName>
    <alternativeName>
        <fullName>Conjugative nickase</fullName>
    </alternativeName>
    <alternativeName>
        <fullName>Mobilization protein MobA</fullName>
    </alternativeName>
</protein>
<proteinExistence type="inferred from homology"/>
<organism>
    <name type="scientific">Lactococcus lactis subsp. cremoris (strain MG1363)</name>
    <dbReference type="NCBI Taxonomy" id="416870"/>
    <lineage>
        <taxon>Bacteria</taxon>
        <taxon>Bacillati</taxon>
        <taxon>Bacillota</taxon>
        <taxon>Bacilli</taxon>
        <taxon>Lactobacillales</taxon>
        <taxon>Streptococcaceae</taxon>
        <taxon>Lactococcus</taxon>
        <taxon>Lactococcus cremoris subsp. cremoris</taxon>
    </lineage>
</organism>
<accession>Q48665</accession>
<accession>A2RKZ4</accession>
<reference key="1">
    <citation type="journal article" date="1996" name="Mol. Microbiol.">
        <title>Splicing of a group II intron in a functional transfer gene of Lactococcus lactis.</title>
        <authorList>
            <person name="Shearman C."/>
            <person name="Godon J.-J."/>
            <person name="Gasson M."/>
        </authorList>
    </citation>
    <scope>NUCLEOTIDE SEQUENCE [GENOMIC DNA]</scope>
</reference>
<reference key="2">
    <citation type="journal article" date="2007" name="J. Bacteriol.">
        <title>The complete genome sequence of the lactic acid bacterial paradigm Lactococcus lactis subsp. cremoris MG1363.</title>
        <authorList>
            <person name="Wegmann U."/>
            <person name="O'Connell-Motherway M."/>
            <person name="Zomer A."/>
            <person name="Buist G."/>
            <person name="Shearman C."/>
            <person name="Canchaya C."/>
            <person name="Ventura M."/>
            <person name="Goesmann A."/>
            <person name="Gasson M.J."/>
            <person name="Kuipers O.P."/>
            <person name="van Sinderen D."/>
            <person name="Kok J."/>
        </authorList>
    </citation>
    <scope>NUCLEOTIDE SEQUENCE [LARGE SCALE GENOMIC DNA]</scope>
    <source>
        <strain>MG1363</strain>
    </source>
</reference>
<dbReference type="EMBL" id="X89922">
    <property type="protein sequence ID" value="CAA61995.1"/>
    <property type="status" value="ALT_SEQ"/>
    <property type="molecule type" value="Genomic_DNA"/>
</dbReference>
<dbReference type="EMBL" id="AM406671">
    <property type="protein sequence ID" value="CAL97960.1"/>
    <property type="status" value="ALT_SEQ"/>
    <property type="molecule type" value="Genomic_DNA"/>
</dbReference>
<dbReference type="PIR" id="S77647">
    <property type="entry name" value="S77647"/>
</dbReference>
<dbReference type="RefSeq" id="YP_009091785.1">
    <property type="nucleotide sequence ID" value="NC_025249.1"/>
</dbReference>
<dbReference type="SMR" id="Q48665"/>
<dbReference type="STRING" id="416870.gene:10444006"/>
<dbReference type="eggNOG" id="COG3843">
    <property type="taxonomic scope" value="Bacteria"/>
</dbReference>
<dbReference type="HOGENOM" id="CLU_031118_4_2_9"/>
<dbReference type="Proteomes" id="UP000000364">
    <property type="component" value="Chromosome"/>
</dbReference>
<dbReference type="GO" id="GO:0046872">
    <property type="term" value="F:metal ion binding"/>
    <property type="evidence" value="ECO:0007669"/>
    <property type="project" value="UniProtKB-KW"/>
</dbReference>
<dbReference type="InterPro" id="IPR005094">
    <property type="entry name" value="Endonuclease_MobA/VirD2"/>
</dbReference>
<dbReference type="InterPro" id="IPR021112">
    <property type="entry name" value="LtrB_C"/>
</dbReference>
<dbReference type="InterPro" id="IPR048299">
    <property type="entry name" value="LtrB_central"/>
</dbReference>
<dbReference type="Pfam" id="PF03432">
    <property type="entry name" value="Relaxase"/>
    <property type="match status" value="1"/>
</dbReference>
<dbReference type="Pfam" id="PF11083">
    <property type="entry name" value="Relaxase_C"/>
    <property type="match status" value="1"/>
</dbReference>
<dbReference type="Pfam" id="PF20874">
    <property type="entry name" value="Relaxase_M"/>
    <property type="match status" value="1"/>
</dbReference>
<sequence length="563" mass="64870">MVYTKHIIVHKLKHLRQAKDYVENAEKTLVNESNEDHLTNLFPYISNPDKTMSKQLVSGHGITNVYDAANEFIATKKLKALSKGTDFNFDPQTGKVRFNVESLEKNNAVLGHHLIQSFSPDDNLTPEQIHEIGRQTILEFTGGEYEFVIATHVDREHIHNHIIFNSTNLYTGKQFDWKVIPKEKTKSGKAYDVTKNNFEKVSDKIASRYGAKIIEKSPGNSHLKYTKWQTQSIYKSQIKQRLDYLLEMSSDIEDFKRKATALNLSFDFSGKWTTYRLLDEPQMKNTRGRNLDKNRPEKYNLESIIERLETNELSLTVDEVVERYEEKVDVVKQDFDYQVTVEKGQIDHMTSKGFYLNVDFGIADRGQIFIGGYKVDQLENRDCVLYLKKNETFRLLSEKEASFTKYLTGHDLAKQLGLYNGTVPLKKEPVISTINQLVDAINFLAEHGVTEGTQFNNMESQLMSALGEAEEKLYVIDNKIMELTKIAKLLIEKESDHSQAVINELENLGVGPSIKYQDIHQELQSEKMSRKILKNKFEQTVDEINTFNEIRVTTLEENKGKIL</sequence>
<keyword id="KW-0184">Conjugation</keyword>
<keyword id="KW-0460">Magnesium</keyword>
<keyword id="KW-0464">Manganese</keyword>
<keyword id="KW-0479">Metal-binding</keyword>
<keyword id="KW-0499">Mobility protein</keyword>
<comment type="function">
    <text>Mediates initiation of conjugal transfer possibly by introducing a single-stranded nick at the potential origin of transfer.</text>
</comment>
<comment type="cofactor">
    <cofactor evidence="2">
        <name>Mg(2+)</name>
        <dbReference type="ChEBI" id="CHEBI:18420"/>
    </cofactor>
    <cofactor evidence="2">
        <name>Mn(2+)</name>
        <dbReference type="ChEBI" id="CHEBI:29035"/>
    </cofactor>
</comment>
<comment type="miscellaneous">
    <text>The gene coding for this protein is interrupted by a group II intron, IntL. Splicing of the intervening intron is necessary for proper protein activity and, therefore, conjugative transfer, as the splicing event brings together the two conserved histidine residues proposed to function as ligands for the metal ion cofactor.</text>
</comment>
<comment type="similarity">
    <text evidence="2">Belongs to the mobilization (MOB) protein type 1 family.</text>
</comment>
<comment type="sequence caution" evidence="2">
    <conflict type="miscellaneous discrepancy">
        <sequence resource="EMBL-CDS" id="CAA61995"/>
    </conflict>
    <text>Intron retention.</text>
</comment>
<comment type="sequence caution" evidence="2">
    <conflict type="miscellaneous discrepancy">
        <sequence resource="EMBL-CDS" id="CAL97960"/>
    </conflict>
    <text>Intron retention.</text>
</comment>
<evidence type="ECO:0000255" key="1"/>
<evidence type="ECO:0000305" key="2"/>